<proteinExistence type="inferred from homology"/>
<comment type="subcellular location">
    <subcellularLocation>
        <location evidence="1">Cell inner membrane</location>
        <topology evidence="1">Multi-pass membrane protein</topology>
    </subcellularLocation>
</comment>
<comment type="similarity">
    <text evidence="1">Belongs to the major facilitator superfamily. DHA1 family. MdtH (TC 2.A.1.2.21) subfamily.</text>
</comment>
<keyword id="KW-0997">Cell inner membrane</keyword>
<keyword id="KW-1003">Cell membrane</keyword>
<keyword id="KW-0472">Membrane</keyword>
<keyword id="KW-0812">Transmembrane</keyword>
<keyword id="KW-1133">Transmembrane helix</keyword>
<keyword id="KW-0813">Transport</keyword>
<organism>
    <name type="scientific">Yersinia enterocolitica serotype O:8 / biotype 1B (strain NCTC 13174 / 8081)</name>
    <dbReference type="NCBI Taxonomy" id="393305"/>
    <lineage>
        <taxon>Bacteria</taxon>
        <taxon>Pseudomonadati</taxon>
        <taxon>Pseudomonadota</taxon>
        <taxon>Gammaproteobacteria</taxon>
        <taxon>Enterobacterales</taxon>
        <taxon>Yersiniaceae</taxon>
        <taxon>Yersinia</taxon>
    </lineage>
</organism>
<dbReference type="EMBL" id="AM286415">
    <property type="protein sequence ID" value="CAL12466.1"/>
    <property type="molecule type" value="Genomic_DNA"/>
</dbReference>
<dbReference type="RefSeq" id="WP_011816537.1">
    <property type="nucleotide sequence ID" value="NC_008800.1"/>
</dbReference>
<dbReference type="RefSeq" id="YP_001006632.1">
    <property type="nucleotide sequence ID" value="NC_008800.1"/>
</dbReference>
<dbReference type="SMR" id="A1JRQ2"/>
<dbReference type="KEGG" id="yen:YE2418"/>
<dbReference type="PATRIC" id="fig|393305.7.peg.2570"/>
<dbReference type="eggNOG" id="COG0477">
    <property type="taxonomic scope" value="Bacteria"/>
</dbReference>
<dbReference type="HOGENOM" id="CLU_001265_60_2_6"/>
<dbReference type="OrthoDB" id="56516at2"/>
<dbReference type="Proteomes" id="UP000000642">
    <property type="component" value="Chromosome"/>
</dbReference>
<dbReference type="GO" id="GO:0005886">
    <property type="term" value="C:plasma membrane"/>
    <property type="evidence" value="ECO:0007669"/>
    <property type="project" value="UniProtKB-SubCell"/>
</dbReference>
<dbReference type="GO" id="GO:0022857">
    <property type="term" value="F:transmembrane transporter activity"/>
    <property type="evidence" value="ECO:0007669"/>
    <property type="project" value="UniProtKB-UniRule"/>
</dbReference>
<dbReference type="CDD" id="cd17329">
    <property type="entry name" value="MFS_MdtH_MDR_like"/>
    <property type="match status" value="1"/>
</dbReference>
<dbReference type="Gene3D" id="1.20.1250.20">
    <property type="entry name" value="MFS general substrate transporter like domains"/>
    <property type="match status" value="1"/>
</dbReference>
<dbReference type="HAMAP" id="MF_01529">
    <property type="entry name" value="MFS_MdtH"/>
    <property type="match status" value="1"/>
</dbReference>
<dbReference type="InterPro" id="IPR011701">
    <property type="entry name" value="MFS"/>
</dbReference>
<dbReference type="InterPro" id="IPR020846">
    <property type="entry name" value="MFS_dom"/>
</dbReference>
<dbReference type="InterPro" id="IPR036259">
    <property type="entry name" value="MFS_trans_sf"/>
</dbReference>
<dbReference type="InterPro" id="IPR050171">
    <property type="entry name" value="MFS_Transporters"/>
</dbReference>
<dbReference type="InterPro" id="IPR022855">
    <property type="entry name" value="Multidrug-R_MdtH"/>
</dbReference>
<dbReference type="NCBIfam" id="NF008650">
    <property type="entry name" value="PRK11646.1"/>
    <property type="match status" value="1"/>
</dbReference>
<dbReference type="PANTHER" id="PTHR23517:SF2">
    <property type="entry name" value="MULTIDRUG RESISTANCE PROTEIN MDTH"/>
    <property type="match status" value="1"/>
</dbReference>
<dbReference type="PANTHER" id="PTHR23517">
    <property type="entry name" value="RESISTANCE PROTEIN MDTM, PUTATIVE-RELATED-RELATED"/>
    <property type="match status" value="1"/>
</dbReference>
<dbReference type="Pfam" id="PF07690">
    <property type="entry name" value="MFS_1"/>
    <property type="match status" value="1"/>
</dbReference>
<dbReference type="SUPFAM" id="SSF103473">
    <property type="entry name" value="MFS general substrate transporter"/>
    <property type="match status" value="1"/>
</dbReference>
<dbReference type="PROSITE" id="PS50850">
    <property type="entry name" value="MFS"/>
    <property type="match status" value="1"/>
</dbReference>
<feature type="chain" id="PRO_1000068682" description="Multidrug resistance protein MdtH">
    <location>
        <begin position="1"/>
        <end position="401"/>
    </location>
</feature>
<feature type="transmembrane region" description="Helical" evidence="1">
    <location>
        <begin position="13"/>
        <end position="33"/>
    </location>
</feature>
<feature type="transmembrane region" description="Helical" evidence="1">
    <location>
        <begin position="34"/>
        <end position="54"/>
    </location>
</feature>
<feature type="transmembrane region" description="Helical" evidence="1">
    <location>
        <begin position="99"/>
        <end position="116"/>
    </location>
</feature>
<feature type="transmembrane region" description="Helical" evidence="1">
    <location>
        <begin position="139"/>
        <end position="159"/>
    </location>
</feature>
<feature type="transmembrane region" description="Helical" evidence="1">
    <location>
        <begin position="165"/>
        <end position="185"/>
    </location>
</feature>
<feature type="transmembrane region" description="Helical" evidence="1">
    <location>
        <begin position="214"/>
        <end position="234"/>
    </location>
</feature>
<feature type="transmembrane region" description="Helical" evidence="1">
    <location>
        <begin position="243"/>
        <end position="263"/>
    </location>
</feature>
<feature type="transmembrane region" description="Helical" evidence="1">
    <location>
        <begin position="277"/>
        <end position="297"/>
    </location>
</feature>
<feature type="transmembrane region" description="Helical" evidence="1">
    <location>
        <begin position="299"/>
        <end position="319"/>
    </location>
</feature>
<feature type="transmembrane region" description="Helical" evidence="1">
    <location>
        <begin position="340"/>
        <end position="360"/>
    </location>
</feature>
<feature type="transmembrane region" description="Helical" evidence="1">
    <location>
        <begin position="368"/>
        <end position="388"/>
    </location>
</feature>
<accession>A1JRQ2</accession>
<sequence length="401" mass="44492">MALVSQARSLGKYFLLLDNLLVVLGFFIVFPLISIRFVDQLGWAAVLVGLALGLRQLVQQGLGIFGGAIADRFGAKPMIVTGMLMRAAGFALMAMADEPWILWLACALSGLGGTLFDPPRTALVIKLTRPHERGRFYSLLMMQDSAGAVIGALIGSWLLQYDFHFVCWTGAVIFILAAGWNVWLLPAYRISTVRAPMKEGLMRVLRDRRFVTYVLTLTGYYMLSVQVMLMLPIVVNEIAGSPAAVKWMYAIEAALSLTLLYPIARWSEKRFRLEQRLMFGLLIMTLSLFPVGLITHLQTLFMFICFFYMGSIIAEPARETLSASLADSRARGSYMGFSRLGLALGGALGYTGGGWMYDTGRTLEMPELPWFLLGVIGLITLVGLYWQFNQRRIESAMLSGS</sequence>
<evidence type="ECO:0000255" key="1">
    <source>
        <dbReference type="HAMAP-Rule" id="MF_01529"/>
    </source>
</evidence>
<reference key="1">
    <citation type="journal article" date="2006" name="PLoS Genet.">
        <title>The complete genome sequence and comparative genome analysis of the high pathogenicity Yersinia enterocolitica strain 8081.</title>
        <authorList>
            <person name="Thomson N.R."/>
            <person name="Howard S."/>
            <person name="Wren B.W."/>
            <person name="Holden M.T.G."/>
            <person name="Crossman L."/>
            <person name="Challis G.L."/>
            <person name="Churcher C."/>
            <person name="Mungall K."/>
            <person name="Brooks K."/>
            <person name="Chillingworth T."/>
            <person name="Feltwell T."/>
            <person name="Abdellah Z."/>
            <person name="Hauser H."/>
            <person name="Jagels K."/>
            <person name="Maddison M."/>
            <person name="Moule S."/>
            <person name="Sanders M."/>
            <person name="Whitehead S."/>
            <person name="Quail M.A."/>
            <person name="Dougan G."/>
            <person name="Parkhill J."/>
            <person name="Prentice M.B."/>
        </authorList>
    </citation>
    <scope>NUCLEOTIDE SEQUENCE [LARGE SCALE GENOMIC DNA]</scope>
    <source>
        <strain>NCTC 13174 / 8081</strain>
    </source>
</reference>
<name>MDTH_YERE8</name>
<protein>
    <recommendedName>
        <fullName evidence="1">Multidrug resistance protein MdtH</fullName>
    </recommendedName>
</protein>
<gene>
    <name evidence="1" type="primary">mdtH</name>
    <name type="ordered locus">YE2418</name>
</gene>